<comment type="function">
    <text evidence="3 4 6">Contributes to cuticular wax and suberin biosynthesis. Involved in both decarbonylation and acyl-reduction wax synthesis pathways. Required for elongation of C24 fatty acids, an essential step of the cuticular wax production (PubMed:10330468, PubMed:11041893). Major condensing enzyme for stem wax and pollen coat lipid biosynthesis (PubMed:12467640).</text>
</comment>
<comment type="catalytic activity">
    <reaction evidence="3">
        <text>a very-long-chain acyl-CoA + malonyl-CoA + H(+) = a very-long-chain 3-oxoacyl-CoA + CO2 + CoA</text>
        <dbReference type="Rhea" id="RHEA:32727"/>
        <dbReference type="ChEBI" id="CHEBI:15378"/>
        <dbReference type="ChEBI" id="CHEBI:16526"/>
        <dbReference type="ChEBI" id="CHEBI:57287"/>
        <dbReference type="ChEBI" id="CHEBI:57384"/>
        <dbReference type="ChEBI" id="CHEBI:90725"/>
        <dbReference type="ChEBI" id="CHEBI:90736"/>
        <dbReference type="EC" id="2.3.1.199"/>
    </reaction>
</comment>
<comment type="activity regulation">
    <text evidence="9">Strongly inhibited by metazachlor and mefluidide.</text>
</comment>
<comment type="pathway">
    <text>Lipid metabolism; fatty acid biosynthesis.</text>
</comment>
<comment type="subcellular location">
    <subcellularLocation>
        <location evidence="6 8">Endoplasmic reticulum membrane</location>
        <topology evidence="2">Multi-pass membrane protein</topology>
    </subcellularLocation>
</comment>
<comment type="alternative products">
    <event type="alternative splicing"/>
    <isoform>
        <id>Q9XF43-1</id>
        <name>1</name>
        <sequence type="displayed"/>
    </isoform>
    <isoform>
        <id>Q9XF43-2</id>
        <name>2</name>
        <sequence type="described" ref="VSP_022340 VSP_022341"/>
    </isoform>
</comment>
<comment type="tissue specificity">
    <text evidence="3 5 8">In epidermal cells of aerial tissues and in the tapetum of anthers near maturity (PubMed:10330468, PubMed:12177469). Expressed in siliques, flowers and leaves (PubMed:18465198).</text>
</comment>
<comment type="induction">
    <text evidence="5 7 8">Repressed by herbicides such as flufenacet and benfuresate (PubMed:12916765). Up-regulated by osmotic stress and abscisic acid and down-regulated by darkness (PubMed:12177469, PubMed:18465198). Down-regulated by low temperature and up-regulated by salt and drought (PubMed:18465198).</text>
</comment>
<comment type="disruption phenotype">
    <text evidence="3">Plants have no wax crystals and are male sterile.</text>
</comment>
<comment type="similarity">
    <text evidence="13">Belongs to the thiolase-like superfamily. Chalcone/stilbene synthases family.</text>
</comment>
<comment type="sequence caution" evidence="13">
    <conflict type="erroneous initiation">
        <sequence resource="EMBL-CDS" id="BAD94789"/>
    </conflict>
    <text>Truncated N-terminus.</text>
</comment>
<organism>
    <name type="scientific">Arabidopsis thaliana</name>
    <name type="common">Mouse-ear cress</name>
    <dbReference type="NCBI Taxonomy" id="3702"/>
    <lineage>
        <taxon>Eukaryota</taxon>
        <taxon>Viridiplantae</taxon>
        <taxon>Streptophyta</taxon>
        <taxon>Embryophyta</taxon>
        <taxon>Tracheophyta</taxon>
        <taxon>Spermatophyta</taxon>
        <taxon>Magnoliopsida</taxon>
        <taxon>eudicotyledons</taxon>
        <taxon>Gunneridae</taxon>
        <taxon>Pentapetalae</taxon>
        <taxon>rosids</taxon>
        <taxon>malvids</taxon>
        <taxon>Brassicales</taxon>
        <taxon>Brassicaceae</taxon>
        <taxon>Camelineae</taxon>
        <taxon>Arabidopsis</taxon>
    </lineage>
</organism>
<feature type="chain" id="PRO_0000249098" description="3-ketoacyl-CoA synthase 6">
    <location>
        <begin position="1"/>
        <end position="497"/>
    </location>
</feature>
<feature type="transmembrane region" description="Helical" evidence="2">
    <location>
        <begin position="25"/>
        <end position="45"/>
    </location>
</feature>
<feature type="transmembrane region" description="Helical" evidence="2">
    <location>
        <begin position="64"/>
        <end position="84"/>
    </location>
</feature>
<feature type="domain" description="FAE" evidence="2">
    <location>
        <begin position="81"/>
        <end position="370"/>
    </location>
</feature>
<feature type="active site" evidence="1">
    <location>
        <position position="225"/>
    </location>
</feature>
<feature type="active site" evidence="1">
    <location>
        <position position="304"/>
    </location>
</feature>
<feature type="active site" evidence="1">
    <location>
        <position position="388"/>
    </location>
</feature>
<feature type="active site" evidence="1">
    <location>
        <position position="392"/>
    </location>
</feature>
<feature type="active site" evidence="1">
    <location>
        <position position="421"/>
    </location>
</feature>
<feature type="active site" evidence="1">
    <location>
        <position position="425"/>
    </location>
</feature>
<feature type="splice variant" id="VSP_022340" description="In isoform 2." evidence="13">
    <original>PLVLPASEQLLFLTSLIGRKIFNPKWKP</original>
    <variation>NKHTSFYFTYIYTLTMIYTVKTISRGGH</variation>
    <location>
        <begin position="350"/>
        <end position="377"/>
    </location>
</feature>
<feature type="splice variant" id="VSP_022341" description="In isoform 2." evidence="13">
    <location>
        <begin position="378"/>
        <end position="497"/>
    </location>
</feature>
<feature type="sequence conflict" description="In Ref. 5; AAL50069/AAM16230." evidence="13" ref="5">
    <original>F</original>
    <variation>L</variation>
    <location>
        <position position="73"/>
    </location>
</feature>
<evidence type="ECO:0000250" key="1">
    <source>
        <dbReference type="UniProtKB" id="Q38860"/>
    </source>
</evidence>
<evidence type="ECO:0000255" key="2"/>
<evidence type="ECO:0000269" key="3">
    <source>
    </source>
</evidence>
<evidence type="ECO:0000269" key="4">
    <source>
    </source>
</evidence>
<evidence type="ECO:0000269" key="5">
    <source>
    </source>
</evidence>
<evidence type="ECO:0000269" key="6">
    <source>
    </source>
</evidence>
<evidence type="ECO:0000269" key="7">
    <source>
    </source>
</evidence>
<evidence type="ECO:0000269" key="8">
    <source>
    </source>
</evidence>
<evidence type="ECO:0000269" key="9">
    <source>
    </source>
</evidence>
<evidence type="ECO:0000303" key="10">
    <source>
    </source>
</evidence>
<evidence type="ECO:0000303" key="11">
    <source>
    </source>
</evidence>
<evidence type="ECO:0000303" key="12">
    <source>
    </source>
</evidence>
<evidence type="ECO:0000305" key="13"/>
<evidence type="ECO:0000312" key="14">
    <source>
        <dbReference type="Araport" id="AT1G68530"/>
    </source>
</evidence>
<evidence type="ECO:0000312" key="15">
    <source>
        <dbReference type="EMBL" id="AAG52390.1"/>
    </source>
</evidence>
<gene>
    <name evidence="10" type="primary">CUT1</name>
    <name evidence="11" type="synonym">CER6</name>
    <name type="synonym">EL6</name>
    <name evidence="12" type="synonym">KCS6</name>
    <name evidence="14" type="ordered locus">At1g68530</name>
    <name evidence="15" type="ORF">T26J14.10</name>
</gene>
<keyword id="KW-0012">Acyltransferase</keyword>
<keyword id="KW-0025">Alternative splicing</keyword>
<keyword id="KW-0256">Endoplasmic reticulum</keyword>
<keyword id="KW-0472">Membrane</keyword>
<keyword id="KW-1185">Reference proteome</keyword>
<keyword id="KW-0808">Transferase</keyword>
<keyword id="KW-0812">Transmembrane</keyword>
<keyword id="KW-1133">Transmembrane helix</keyword>
<name>KCS6_ARATH</name>
<protein>
    <recommendedName>
        <fullName evidence="12">3-ketoacyl-CoA synthase 6</fullName>
        <shortName evidence="12">KCS-6</shortName>
        <ecNumber evidence="3">2.3.1.199</ecNumber>
    </recommendedName>
    <alternativeName>
        <fullName evidence="10">Cuticular protein 1</fullName>
    </alternativeName>
    <alternativeName>
        <fullName evidence="11">Eceriferum 6</fullName>
    </alternativeName>
    <alternativeName>
        <fullName evidence="12">Very long-chain fatty acid condensing enzyme 6</fullName>
        <shortName evidence="12">VLCFA condensing enzyme 6</shortName>
    </alternativeName>
</protein>
<sequence>MPQAPMPEFSSSVKLKYVKLGYQYLVNHFLSFLLIPIMAIVAVELLRMGPEEILNVWNSLQFDLVQVLCSSFFVIFISTVYFMSKPRTIYLVDYSCYKPPVTCRVPFATFMEHSRLILKDKPKSVEFQMRILERSGLGEETCLPPAIHYIPPTPTMDAARSEAQMVIFEAMDDLFKKTGLKPKDVDILIVNCSLFSPTPSLSAMVINKYKLRSNIKSFNLSGMGCSAGLISVDLARDLLQVHPNSNAIIVSTEIITPNYYQGNERAMLLPNCLFRMGAAAIHMSNRRSDRWRAKYKLSHLVRTHRGADDKSFYCVYEQEDKEGHVGINLSKDLMAIAGEALKANITTIGPLVLPASEQLLFLTSLIGRKIFNPKWKPYIPDFKLAFEHFCIHAGGRAVIDELQKNLQLSGEHVEASRMTLHRFGNTSSSSLWYELSYIESKGRMRRGDRVWQIAFGSGFKCNSAVWKCNRTIKTPKDGPWSDCIDRYPVFIPEVVKL</sequence>
<reference key="1">
    <citation type="journal article" date="1999" name="Plant Cell">
        <title>CUT1, an Arabidopsis gene required for cuticular wax biosynthesis and pollen fertility, encodes a very-long-chain fatty acid condensing enzyme.</title>
        <authorList>
            <person name="Millar A.A."/>
            <person name="Clemens S."/>
            <person name="Zachgo S."/>
            <person name="Giblin E.M."/>
            <person name="Taylor D.C."/>
            <person name="Kunst L."/>
        </authorList>
    </citation>
    <scope>NUCLEOTIDE SEQUENCE [MRNA]</scope>
    <scope>FUNCTION</scope>
    <scope>CATALYTIC ACTIVITY</scope>
    <scope>TISSUE SPECIFICITY</scope>
    <scope>DISRUPTION PHENOTYPE</scope>
    <source>
        <strain>cv. Columbia</strain>
    </source>
</reference>
<reference key="2">
    <citation type="journal article" date="2000" name="Plant Cell">
        <title>Alterations in CER6, a gene identical to CUT1, differentially affect long-chain lipid content on the surface of pollen and stems.</title>
        <authorList>
            <person name="Fiebig A."/>
            <person name="Mayfield J.A."/>
            <person name="Miley N.L."/>
            <person name="Chau S."/>
            <person name="Fischer R.L."/>
            <person name="Preuss D."/>
        </authorList>
    </citation>
    <scope>NUCLEOTIDE SEQUENCE [MRNA]</scope>
    <scope>FUNCTION</scope>
</reference>
<reference key="3">
    <citation type="journal article" date="2000" name="Nature">
        <title>Sequence and analysis of chromosome 1 of the plant Arabidopsis thaliana.</title>
        <authorList>
            <person name="Theologis A."/>
            <person name="Ecker J.R."/>
            <person name="Palm C.J."/>
            <person name="Federspiel N.A."/>
            <person name="Kaul S."/>
            <person name="White O."/>
            <person name="Alonso J."/>
            <person name="Altafi H."/>
            <person name="Araujo R."/>
            <person name="Bowman C.L."/>
            <person name="Brooks S.Y."/>
            <person name="Buehler E."/>
            <person name="Chan A."/>
            <person name="Chao Q."/>
            <person name="Chen H."/>
            <person name="Cheuk R.F."/>
            <person name="Chin C.W."/>
            <person name="Chung M.K."/>
            <person name="Conn L."/>
            <person name="Conway A.B."/>
            <person name="Conway A.R."/>
            <person name="Creasy T.H."/>
            <person name="Dewar K."/>
            <person name="Dunn P."/>
            <person name="Etgu P."/>
            <person name="Feldblyum T.V."/>
            <person name="Feng J.-D."/>
            <person name="Fong B."/>
            <person name="Fujii C.Y."/>
            <person name="Gill J.E."/>
            <person name="Goldsmith A.D."/>
            <person name="Haas B."/>
            <person name="Hansen N.F."/>
            <person name="Hughes B."/>
            <person name="Huizar L."/>
            <person name="Hunter J.L."/>
            <person name="Jenkins J."/>
            <person name="Johnson-Hopson C."/>
            <person name="Khan S."/>
            <person name="Khaykin E."/>
            <person name="Kim C.J."/>
            <person name="Koo H.L."/>
            <person name="Kremenetskaia I."/>
            <person name="Kurtz D.B."/>
            <person name="Kwan A."/>
            <person name="Lam B."/>
            <person name="Langin-Hooper S."/>
            <person name="Lee A."/>
            <person name="Lee J.M."/>
            <person name="Lenz C.A."/>
            <person name="Li J.H."/>
            <person name="Li Y.-P."/>
            <person name="Lin X."/>
            <person name="Liu S.X."/>
            <person name="Liu Z.A."/>
            <person name="Luros J.S."/>
            <person name="Maiti R."/>
            <person name="Marziali A."/>
            <person name="Militscher J."/>
            <person name="Miranda M."/>
            <person name="Nguyen M."/>
            <person name="Nierman W.C."/>
            <person name="Osborne B.I."/>
            <person name="Pai G."/>
            <person name="Peterson J."/>
            <person name="Pham P.K."/>
            <person name="Rizzo M."/>
            <person name="Rooney T."/>
            <person name="Rowley D."/>
            <person name="Sakano H."/>
            <person name="Salzberg S.L."/>
            <person name="Schwartz J.R."/>
            <person name="Shinn P."/>
            <person name="Southwick A.M."/>
            <person name="Sun H."/>
            <person name="Tallon L.J."/>
            <person name="Tambunga G."/>
            <person name="Toriumi M.J."/>
            <person name="Town C.D."/>
            <person name="Utterback T."/>
            <person name="Van Aken S."/>
            <person name="Vaysberg M."/>
            <person name="Vysotskaia V.S."/>
            <person name="Walker M."/>
            <person name="Wu D."/>
            <person name="Yu G."/>
            <person name="Fraser C.M."/>
            <person name="Venter J.C."/>
            <person name="Davis R.W."/>
        </authorList>
    </citation>
    <scope>NUCLEOTIDE SEQUENCE [LARGE SCALE GENOMIC DNA]</scope>
    <source>
        <strain>cv. Columbia</strain>
    </source>
</reference>
<reference key="4">
    <citation type="journal article" date="2017" name="Plant J.">
        <title>Araport11: a complete reannotation of the Arabidopsis thaliana reference genome.</title>
        <authorList>
            <person name="Cheng C.Y."/>
            <person name="Krishnakumar V."/>
            <person name="Chan A.P."/>
            <person name="Thibaud-Nissen F."/>
            <person name="Schobel S."/>
            <person name="Town C.D."/>
        </authorList>
    </citation>
    <scope>GENOME REANNOTATION</scope>
    <source>
        <strain>cv. Columbia</strain>
    </source>
</reference>
<reference key="5">
    <citation type="journal article" date="2003" name="Science">
        <title>Empirical analysis of transcriptional activity in the Arabidopsis genome.</title>
        <authorList>
            <person name="Yamada K."/>
            <person name="Lim J."/>
            <person name="Dale J.M."/>
            <person name="Chen H."/>
            <person name="Shinn P."/>
            <person name="Palm C.J."/>
            <person name="Southwick A.M."/>
            <person name="Wu H.C."/>
            <person name="Kim C.J."/>
            <person name="Nguyen M."/>
            <person name="Pham P.K."/>
            <person name="Cheuk R.F."/>
            <person name="Karlin-Newmann G."/>
            <person name="Liu S.X."/>
            <person name="Lam B."/>
            <person name="Sakano H."/>
            <person name="Wu T."/>
            <person name="Yu G."/>
            <person name="Miranda M."/>
            <person name="Quach H.L."/>
            <person name="Tripp M."/>
            <person name="Chang C.H."/>
            <person name="Lee J.M."/>
            <person name="Toriumi M.J."/>
            <person name="Chan M.M."/>
            <person name="Tang C.C."/>
            <person name="Onodera C.S."/>
            <person name="Deng J.M."/>
            <person name="Akiyama K."/>
            <person name="Ansari Y."/>
            <person name="Arakawa T."/>
            <person name="Banh J."/>
            <person name="Banno F."/>
            <person name="Bowser L."/>
            <person name="Brooks S.Y."/>
            <person name="Carninci P."/>
            <person name="Chao Q."/>
            <person name="Choy N."/>
            <person name="Enju A."/>
            <person name="Goldsmith A.D."/>
            <person name="Gurjal M."/>
            <person name="Hansen N.F."/>
            <person name="Hayashizaki Y."/>
            <person name="Johnson-Hopson C."/>
            <person name="Hsuan V.W."/>
            <person name="Iida K."/>
            <person name="Karnes M."/>
            <person name="Khan S."/>
            <person name="Koesema E."/>
            <person name="Ishida J."/>
            <person name="Jiang P.X."/>
            <person name="Jones T."/>
            <person name="Kawai J."/>
            <person name="Kamiya A."/>
            <person name="Meyers C."/>
            <person name="Nakajima M."/>
            <person name="Narusaka M."/>
            <person name="Seki M."/>
            <person name="Sakurai T."/>
            <person name="Satou M."/>
            <person name="Tamse R."/>
            <person name="Vaysberg M."/>
            <person name="Wallender E.K."/>
            <person name="Wong C."/>
            <person name="Yamamura Y."/>
            <person name="Yuan S."/>
            <person name="Shinozaki K."/>
            <person name="Davis R.W."/>
            <person name="Theologis A."/>
            <person name="Ecker J.R."/>
        </authorList>
    </citation>
    <scope>NUCLEOTIDE SEQUENCE [LARGE SCALE MRNA]</scope>
    <source>
        <strain>cv. Columbia</strain>
    </source>
</reference>
<reference key="6">
    <citation type="submission" date="2005-03" db="EMBL/GenBank/DDBJ databases">
        <title>Large-scale analysis of RIKEN Arabidopsis full-length (RAFL) cDNAs.</title>
        <authorList>
            <person name="Totoki Y."/>
            <person name="Seki M."/>
            <person name="Ishida J."/>
            <person name="Nakajima M."/>
            <person name="Enju A."/>
            <person name="Kamiya A."/>
            <person name="Narusaka M."/>
            <person name="Shin-i T."/>
            <person name="Nakagawa M."/>
            <person name="Sakamoto N."/>
            <person name="Oishi K."/>
            <person name="Kohara Y."/>
            <person name="Kobayashi M."/>
            <person name="Toyoda A."/>
            <person name="Sakaki Y."/>
            <person name="Sakurai T."/>
            <person name="Iida K."/>
            <person name="Akiyama K."/>
            <person name="Satou M."/>
            <person name="Toyoda T."/>
            <person name="Konagaya A."/>
            <person name="Carninci P."/>
            <person name="Kawai J."/>
            <person name="Hayashizaki Y."/>
            <person name="Shinozaki K."/>
        </authorList>
    </citation>
    <scope>NUCLEOTIDE SEQUENCE [LARGE SCALE MRNA] OF 408-497</scope>
    <source>
        <strain>cv. Columbia</strain>
    </source>
</reference>
<reference key="7">
    <citation type="journal article" date="2002" name="Plant Physiol.">
        <title>Significance of the expression of the CER6 condensing enzyme for cuticular wax production in Arabidopsis.</title>
        <authorList>
            <person name="Hooker T.S."/>
            <person name="Millar A.A."/>
            <person name="Kunst L."/>
        </authorList>
    </citation>
    <scope>TISSUE SPECIFICITY</scope>
    <scope>INDUCTION</scope>
</reference>
<reference key="8">
    <citation type="journal article" date="2003" name="Pest Manag. Sci.">
        <title>Flufenacet herbicide treatment phenocopies the fiddlehead mutant in Arabidopsis thaliana.</title>
        <authorList>
            <person name="Lechelt-Kunze C."/>
            <person name="Meissner R.C."/>
            <person name="Drewes M."/>
            <person name="Tietjen K."/>
        </authorList>
    </citation>
    <scope>INDUCTION</scope>
    <scope>GENE FAMILY</scope>
</reference>
<reference key="9">
    <citation type="journal article" date="2003" name="Prog. Lipid Res.">
        <title>Biosynthesis and secretion of plant cuticular wax.</title>
        <authorList>
            <person name="Kunst L."/>
            <person name="Samuels A.L."/>
        </authorList>
    </citation>
    <scope>FUNCTION</scope>
    <scope>SUBCELLULAR LOCATION</scope>
</reference>
<reference key="10">
    <citation type="journal article" date="2008" name="Plant Mol. Biol.">
        <title>The VLCFA elongase gene family in Arabidopsis thaliana: phylogenetic analysis, 3D modelling and expression profiling.</title>
        <authorList>
            <person name="Joubes J."/>
            <person name="Raffaele S."/>
            <person name="Bourdenx B."/>
            <person name="Garcia C."/>
            <person name="Laroche-Traineau J."/>
            <person name="Moreau P."/>
            <person name="Domergue F."/>
            <person name="Lessire R."/>
        </authorList>
    </citation>
    <scope>GENE FAMILY</scope>
    <scope>NOMENCLATURE</scope>
    <scope>3D-STRUCTURE MODELING</scope>
    <scope>SUBCELLULAR LOCATION</scope>
    <scope>TISSUE SPECIFICITY</scope>
    <scope>INDUCTION</scope>
</reference>
<reference key="11">
    <citation type="journal article" date="2012" name="Phytochemistry">
        <title>Inhibition of saturated very-long-chain fatty acid biosynthesis by mefluidide and perfluidone, selective inhibitors of 3-ketoacyl-CoA synthases.</title>
        <authorList>
            <person name="Tresch S."/>
            <person name="Heilmann M."/>
            <person name="Christiansen N."/>
            <person name="Looser R."/>
            <person name="Grossmann K."/>
        </authorList>
    </citation>
    <scope>ACTIVITY REGULATION</scope>
</reference>
<proteinExistence type="evidence at protein level"/>
<dbReference type="EC" id="2.3.1.199" evidence="3"/>
<dbReference type="EMBL" id="AF129511">
    <property type="protein sequence ID" value="AAD37122.1"/>
    <property type="molecule type" value="mRNA"/>
</dbReference>
<dbReference type="EMBL" id="AC011915">
    <property type="protein sequence ID" value="AAG52390.1"/>
    <property type="molecule type" value="Genomic_DNA"/>
</dbReference>
<dbReference type="EMBL" id="CP002684">
    <property type="protein sequence ID" value="AEE34804.1"/>
    <property type="molecule type" value="Genomic_DNA"/>
</dbReference>
<dbReference type="EMBL" id="CP002684">
    <property type="protein sequence ID" value="AEE34805.1"/>
    <property type="molecule type" value="Genomic_DNA"/>
</dbReference>
<dbReference type="EMBL" id="AY070727">
    <property type="protein sequence ID" value="AAL50069.1"/>
    <property type="molecule type" value="mRNA"/>
</dbReference>
<dbReference type="EMBL" id="AY093969">
    <property type="protein sequence ID" value="AAM16230.1"/>
    <property type="molecule type" value="mRNA"/>
</dbReference>
<dbReference type="EMBL" id="AK221042">
    <property type="protein sequence ID" value="BAD94789.1"/>
    <property type="status" value="ALT_INIT"/>
    <property type="molecule type" value="mRNA"/>
</dbReference>
<dbReference type="PIR" id="T52308">
    <property type="entry name" value="T52308"/>
</dbReference>
<dbReference type="RefSeq" id="NP_177020.1">
    <molecule id="Q9XF43-1"/>
    <property type="nucleotide sequence ID" value="NM_105524.3"/>
</dbReference>
<dbReference type="RefSeq" id="NP_849861.1">
    <molecule id="Q9XF43-2"/>
    <property type="nucleotide sequence ID" value="NM_179530.1"/>
</dbReference>
<dbReference type="SMR" id="Q9XF43"/>
<dbReference type="BioGRID" id="28403">
    <property type="interactions" value="9"/>
</dbReference>
<dbReference type="FunCoup" id="Q9XF43">
    <property type="interactions" value="242"/>
</dbReference>
<dbReference type="STRING" id="3702.Q9XF43"/>
<dbReference type="GlyGen" id="Q9XF43">
    <property type="glycosylation" value="2 sites"/>
</dbReference>
<dbReference type="PaxDb" id="3702-AT1G68530.1"/>
<dbReference type="ProteomicsDB" id="230117">
    <molecule id="Q9XF43-1"/>
</dbReference>
<dbReference type="EnsemblPlants" id="AT1G68530.1">
    <molecule id="Q9XF43-1"/>
    <property type="protein sequence ID" value="AT1G68530.1"/>
    <property type="gene ID" value="AT1G68530"/>
</dbReference>
<dbReference type="EnsemblPlants" id="AT1G68530.2">
    <molecule id="Q9XF43-2"/>
    <property type="protein sequence ID" value="AT1G68530.2"/>
    <property type="gene ID" value="AT1G68530"/>
</dbReference>
<dbReference type="GeneID" id="843182"/>
<dbReference type="Gramene" id="AT1G68530.1">
    <molecule id="Q9XF43-1"/>
    <property type="protein sequence ID" value="AT1G68530.1"/>
    <property type="gene ID" value="AT1G68530"/>
</dbReference>
<dbReference type="Gramene" id="AT1G68530.2">
    <molecule id="Q9XF43-2"/>
    <property type="protein sequence ID" value="AT1G68530.2"/>
    <property type="gene ID" value="AT1G68530"/>
</dbReference>
<dbReference type="KEGG" id="ath:AT1G68530"/>
<dbReference type="Araport" id="AT1G68530"/>
<dbReference type="TAIR" id="AT1G68530">
    <property type="gene designation" value="KCS6"/>
</dbReference>
<dbReference type="eggNOG" id="ENOG502QPKZ">
    <property type="taxonomic scope" value="Eukaryota"/>
</dbReference>
<dbReference type="HOGENOM" id="CLU_013238_2_1_1"/>
<dbReference type="InParanoid" id="Q9XF43"/>
<dbReference type="OMA" id="WYELNFI"/>
<dbReference type="OrthoDB" id="329835at2759"/>
<dbReference type="PhylomeDB" id="Q9XF43"/>
<dbReference type="BioCyc" id="ARA:AT1G68530-MONOMER"/>
<dbReference type="BioCyc" id="MetaCyc:AT1G68530-MONOMER"/>
<dbReference type="BRENDA" id="2.3.1.199">
    <property type="organism ID" value="399"/>
</dbReference>
<dbReference type="UniPathway" id="UPA00094"/>
<dbReference type="PRO" id="PR:Q9XF43"/>
<dbReference type="Proteomes" id="UP000006548">
    <property type="component" value="Chromosome 1"/>
</dbReference>
<dbReference type="ExpressionAtlas" id="Q9XF43">
    <property type="expression patterns" value="baseline and differential"/>
</dbReference>
<dbReference type="GO" id="GO:0005783">
    <property type="term" value="C:endoplasmic reticulum"/>
    <property type="evidence" value="ECO:0000314"/>
    <property type="project" value="TAIR"/>
</dbReference>
<dbReference type="GO" id="GO:0005789">
    <property type="term" value="C:endoplasmic reticulum membrane"/>
    <property type="evidence" value="ECO:0007669"/>
    <property type="project" value="UniProtKB-SubCell"/>
</dbReference>
<dbReference type="GO" id="GO:0005739">
    <property type="term" value="C:mitochondrion"/>
    <property type="evidence" value="ECO:0007005"/>
    <property type="project" value="TAIR"/>
</dbReference>
<dbReference type="GO" id="GO:0009922">
    <property type="term" value="F:fatty acid elongase activity"/>
    <property type="evidence" value="ECO:0007669"/>
    <property type="project" value="UniProtKB-EC"/>
</dbReference>
<dbReference type="GO" id="GO:0006633">
    <property type="term" value="P:fatty acid biosynthetic process"/>
    <property type="evidence" value="ECO:0007669"/>
    <property type="project" value="UniProtKB-UniPathway"/>
</dbReference>
<dbReference type="GO" id="GO:0009409">
    <property type="term" value="P:response to cold"/>
    <property type="evidence" value="ECO:0000270"/>
    <property type="project" value="TAIR"/>
</dbReference>
<dbReference type="GO" id="GO:0009416">
    <property type="term" value="P:response to light stimulus"/>
    <property type="evidence" value="ECO:0000270"/>
    <property type="project" value="TAIR"/>
</dbReference>
<dbReference type="GO" id="GO:0009826">
    <property type="term" value="P:unidimensional cell growth"/>
    <property type="evidence" value="ECO:0000315"/>
    <property type="project" value="TAIR"/>
</dbReference>
<dbReference type="GO" id="GO:0010025">
    <property type="term" value="P:wax biosynthetic process"/>
    <property type="evidence" value="ECO:0000315"/>
    <property type="project" value="TAIR"/>
</dbReference>
<dbReference type="CDD" id="cd00831">
    <property type="entry name" value="CHS_like"/>
    <property type="match status" value="1"/>
</dbReference>
<dbReference type="FunFam" id="3.40.47.10:FF:000028">
    <property type="entry name" value="3-ketoacyl-CoA synthase"/>
    <property type="match status" value="1"/>
</dbReference>
<dbReference type="Gene3D" id="3.40.47.10">
    <property type="match status" value="1"/>
</dbReference>
<dbReference type="InterPro" id="IPR012392">
    <property type="entry name" value="3-ktacl-CoA_syn"/>
</dbReference>
<dbReference type="InterPro" id="IPR013747">
    <property type="entry name" value="ACP_syn_III_C"/>
</dbReference>
<dbReference type="InterPro" id="IPR013601">
    <property type="entry name" value="FAE1_typ3_polyketide_synth"/>
</dbReference>
<dbReference type="InterPro" id="IPR016039">
    <property type="entry name" value="Thiolase-like"/>
</dbReference>
<dbReference type="PANTHER" id="PTHR31561">
    <property type="entry name" value="3-KETOACYL-COA SYNTHASE"/>
    <property type="match status" value="1"/>
</dbReference>
<dbReference type="Pfam" id="PF08541">
    <property type="entry name" value="ACP_syn_III_C"/>
    <property type="match status" value="1"/>
</dbReference>
<dbReference type="Pfam" id="PF08392">
    <property type="entry name" value="FAE1_CUT1_RppA"/>
    <property type="match status" value="1"/>
</dbReference>
<dbReference type="PIRSF" id="PIRSF036417">
    <property type="entry name" value="3-ktacl-CoA_syn"/>
    <property type="match status" value="1"/>
</dbReference>
<dbReference type="SUPFAM" id="SSF53901">
    <property type="entry name" value="Thiolase-like"/>
    <property type="match status" value="2"/>
</dbReference>
<accession>Q9XF43</accession>
<accession>Q3ECG1</accession>
<accession>Q56ZC4</accession>
<accession>Q8VYJ5</accession>